<protein>
    <recommendedName>
        <fullName evidence="1">Proline--tRNA ligase</fullName>
        <ecNumber evidence="1">6.1.1.15</ecNumber>
    </recommendedName>
    <alternativeName>
        <fullName evidence="1">Prolyl-tRNA synthetase</fullName>
        <shortName evidence="1">ProRS</shortName>
    </alternativeName>
</protein>
<gene>
    <name evidence="1" type="primary">proS</name>
    <name type="ordered locus">Oant_2405</name>
</gene>
<comment type="function">
    <text evidence="1">Catalyzes the attachment of proline to tRNA(Pro) in a two-step reaction: proline is first activated by ATP to form Pro-AMP and then transferred to the acceptor end of tRNA(Pro).</text>
</comment>
<comment type="catalytic activity">
    <reaction evidence="1">
        <text>tRNA(Pro) + L-proline + ATP = L-prolyl-tRNA(Pro) + AMP + diphosphate</text>
        <dbReference type="Rhea" id="RHEA:14305"/>
        <dbReference type="Rhea" id="RHEA-COMP:9700"/>
        <dbReference type="Rhea" id="RHEA-COMP:9702"/>
        <dbReference type="ChEBI" id="CHEBI:30616"/>
        <dbReference type="ChEBI" id="CHEBI:33019"/>
        <dbReference type="ChEBI" id="CHEBI:60039"/>
        <dbReference type="ChEBI" id="CHEBI:78442"/>
        <dbReference type="ChEBI" id="CHEBI:78532"/>
        <dbReference type="ChEBI" id="CHEBI:456215"/>
        <dbReference type="EC" id="6.1.1.15"/>
    </reaction>
</comment>
<comment type="subunit">
    <text evidence="1">Homodimer.</text>
</comment>
<comment type="subcellular location">
    <subcellularLocation>
        <location evidence="1">Cytoplasm</location>
    </subcellularLocation>
</comment>
<comment type="similarity">
    <text evidence="1">Belongs to the class-II aminoacyl-tRNA synthetase family. ProS type 2 subfamily.</text>
</comment>
<name>SYP_BRUA4</name>
<evidence type="ECO:0000255" key="1">
    <source>
        <dbReference type="HAMAP-Rule" id="MF_01570"/>
    </source>
</evidence>
<keyword id="KW-0030">Aminoacyl-tRNA synthetase</keyword>
<keyword id="KW-0067">ATP-binding</keyword>
<keyword id="KW-0963">Cytoplasm</keyword>
<keyword id="KW-0436">Ligase</keyword>
<keyword id="KW-0547">Nucleotide-binding</keyword>
<keyword id="KW-0648">Protein biosynthesis</keyword>
<keyword id="KW-1185">Reference proteome</keyword>
<sequence length="442" mass="49537">MRLSRYFLPILKENPKEAEIVSHRLMLRSGMIRQQSAGIYSWLPIGLKVLNKVCDIIREEQNRAGANEILMPTIQSADLWRESGRYDAYGKEMLRIQDRQERDMLFGPTNEEMVTDIFRSYVRSYKDLPLNLYHIQWKFRDEVRPRFGVMRSREFLMKDAYSFDLDYEGAKMAYYRMFVSYLRTFARVGLQAIPMRADTGPIGGDLSHEFIILAETGESQVFCDKAYLDLAVPGADTDFRNDAQLTDIVNRWTTPYAATDEMHDEADWSKVKPEDQVSARGIEVGHIFHFGTKYSEPMGAKVQGPDGKEHLVSMGSYGIGPSRLVAAAIEAFHDDAGIIWPKAIAPFGAGIVNMKPGDEGCDAVSEKIYEALTNAGVDPLLDDTDDRPGAKFATMDLIGLPTQVIVGPRGVAAGEVEIKDRKTGERQSLSVEAAINLLTAEA</sequence>
<reference key="1">
    <citation type="journal article" date="2011" name="J. Bacteriol.">
        <title>Genome of Ochrobactrum anthropi ATCC 49188 T, a versatile opportunistic pathogen and symbiont of several eukaryotic hosts.</title>
        <authorList>
            <person name="Chain P.S."/>
            <person name="Lang D.M."/>
            <person name="Comerci D.J."/>
            <person name="Malfatti S.A."/>
            <person name="Vergez L.M."/>
            <person name="Shin M."/>
            <person name="Ugalde R.A."/>
            <person name="Garcia E."/>
            <person name="Tolmasky M.E."/>
        </authorList>
    </citation>
    <scope>NUCLEOTIDE SEQUENCE [LARGE SCALE GENOMIC DNA]</scope>
    <source>
        <strain>ATCC 49188 / DSM 6882 / CCUG 24695 / JCM 21032 / LMG 3331 / NBRC 15819 / NCTC 12168 / Alc 37</strain>
    </source>
</reference>
<organism>
    <name type="scientific">Brucella anthropi (strain ATCC 49188 / DSM 6882 / CCUG 24695 / JCM 21032 / LMG 3331 / NBRC 15819 / NCTC 12168 / Alc 37)</name>
    <name type="common">Ochrobactrum anthropi</name>
    <dbReference type="NCBI Taxonomy" id="439375"/>
    <lineage>
        <taxon>Bacteria</taxon>
        <taxon>Pseudomonadati</taxon>
        <taxon>Pseudomonadota</taxon>
        <taxon>Alphaproteobacteria</taxon>
        <taxon>Hyphomicrobiales</taxon>
        <taxon>Brucellaceae</taxon>
        <taxon>Brucella/Ochrobactrum group</taxon>
        <taxon>Brucella</taxon>
    </lineage>
</organism>
<feature type="chain" id="PRO_1000069180" description="Proline--tRNA ligase">
    <location>
        <begin position="1"/>
        <end position="442"/>
    </location>
</feature>
<proteinExistence type="inferred from homology"/>
<dbReference type="EC" id="6.1.1.15" evidence="1"/>
<dbReference type="EMBL" id="CP000758">
    <property type="protein sequence ID" value="ABS15119.1"/>
    <property type="molecule type" value="Genomic_DNA"/>
</dbReference>
<dbReference type="RefSeq" id="WP_012092253.1">
    <property type="nucleotide sequence ID" value="NC_009667.1"/>
</dbReference>
<dbReference type="SMR" id="A6X1L5"/>
<dbReference type="STRING" id="439375.Oant_2405"/>
<dbReference type="KEGG" id="oan:Oant_2405"/>
<dbReference type="PATRIC" id="fig|439375.7.peg.2537"/>
<dbReference type="eggNOG" id="COG0442">
    <property type="taxonomic scope" value="Bacteria"/>
</dbReference>
<dbReference type="HOGENOM" id="CLU_016739_4_2_5"/>
<dbReference type="PhylomeDB" id="A6X1L5"/>
<dbReference type="Proteomes" id="UP000002301">
    <property type="component" value="Chromosome 1"/>
</dbReference>
<dbReference type="GO" id="GO:0005829">
    <property type="term" value="C:cytosol"/>
    <property type="evidence" value="ECO:0007669"/>
    <property type="project" value="TreeGrafter"/>
</dbReference>
<dbReference type="GO" id="GO:0005524">
    <property type="term" value="F:ATP binding"/>
    <property type="evidence" value="ECO:0007669"/>
    <property type="project" value="UniProtKB-UniRule"/>
</dbReference>
<dbReference type="GO" id="GO:0004827">
    <property type="term" value="F:proline-tRNA ligase activity"/>
    <property type="evidence" value="ECO:0007669"/>
    <property type="project" value="UniProtKB-UniRule"/>
</dbReference>
<dbReference type="GO" id="GO:0006433">
    <property type="term" value="P:prolyl-tRNA aminoacylation"/>
    <property type="evidence" value="ECO:0007669"/>
    <property type="project" value="UniProtKB-UniRule"/>
</dbReference>
<dbReference type="CDD" id="cd00861">
    <property type="entry name" value="ProRS_anticodon_short"/>
    <property type="match status" value="1"/>
</dbReference>
<dbReference type="CDD" id="cd00779">
    <property type="entry name" value="ProRS_core_prok"/>
    <property type="match status" value="1"/>
</dbReference>
<dbReference type="FunFam" id="3.30.930.10:FF:000042">
    <property type="entry name" value="probable proline--tRNA ligase, mitochondrial"/>
    <property type="match status" value="1"/>
</dbReference>
<dbReference type="FunFam" id="3.40.50.800:FF:000032">
    <property type="entry name" value="Proline--tRNA ligase"/>
    <property type="match status" value="1"/>
</dbReference>
<dbReference type="Gene3D" id="3.40.50.800">
    <property type="entry name" value="Anticodon-binding domain"/>
    <property type="match status" value="1"/>
</dbReference>
<dbReference type="Gene3D" id="3.30.930.10">
    <property type="entry name" value="Bira Bifunctional Protein, Domain 2"/>
    <property type="match status" value="1"/>
</dbReference>
<dbReference type="HAMAP" id="MF_01570">
    <property type="entry name" value="Pro_tRNA_synth_type2"/>
    <property type="match status" value="1"/>
</dbReference>
<dbReference type="InterPro" id="IPR002314">
    <property type="entry name" value="aa-tRNA-synt_IIb"/>
</dbReference>
<dbReference type="InterPro" id="IPR006195">
    <property type="entry name" value="aa-tRNA-synth_II"/>
</dbReference>
<dbReference type="InterPro" id="IPR045864">
    <property type="entry name" value="aa-tRNA-synth_II/BPL/LPL"/>
</dbReference>
<dbReference type="InterPro" id="IPR004154">
    <property type="entry name" value="Anticodon-bd"/>
</dbReference>
<dbReference type="InterPro" id="IPR036621">
    <property type="entry name" value="Anticodon-bd_dom_sf"/>
</dbReference>
<dbReference type="InterPro" id="IPR002316">
    <property type="entry name" value="Pro-tRNA-ligase_IIa"/>
</dbReference>
<dbReference type="InterPro" id="IPR004500">
    <property type="entry name" value="Pro-tRNA-synth_IIa_bac-type"/>
</dbReference>
<dbReference type="InterPro" id="IPR050062">
    <property type="entry name" value="Pro-tRNA_synthetase"/>
</dbReference>
<dbReference type="InterPro" id="IPR023716">
    <property type="entry name" value="Prolyl-tRNA_ligase_IIa_type2"/>
</dbReference>
<dbReference type="InterPro" id="IPR044140">
    <property type="entry name" value="ProRS_anticodon_short"/>
</dbReference>
<dbReference type="InterPro" id="IPR033730">
    <property type="entry name" value="ProRS_core_prok"/>
</dbReference>
<dbReference type="NCBIfam" id="NF008979">
    <property type="entry name" value="PRK12325.1"/>
    <property type="match status" value="1"/>
</dbReference>
<dbReference type="NCBIfam" id="TIGR00409">
    <property type="entry name" value="proS_fam_II"/>
    <property type="match status" value="1"/>
</dbReference>
<dbReference type="PANTHER" id="PTHR42753">
    <property type="entry name" value="MITOCHONDRIAL RIBOSOME PROTEIN L39/PROLYL-TRNA LIGASE FAMILY MEMBER"/>
    <property type="match status" value="1"/>
</dbReference>
<dbReference type="PANTHER" id="PTHR42753:SF2">
    <property type="entry name" value="PROLINE--TRNA LIGASE"/>
    <property type="match status" value="1"/>
</dbReference>
<dbReference type="Pfam" id="PF03129">
    <property type="entry name" value="HGTP_anticodon"/>
    <property type="match status" value="1"/>
</dbReference>
<dbReference type="Pfam" id="PF00587">
    <property type="entry name" value="tRNA-synt_2b"/>
    <property type="match status" value="1"/>
</dbReference>
<dbReference type="PRINTS" id="PR01046">
    <property type="entry name" value="TRNASYNTHPRO"/>
</dbReference>
<dbReference type="SUPFAM" id="SSF52954">
    <property type="entry name" value="Class II aaRS ABD-related"/>
    <property type="match status" value="1"/>
</dbReference>
<dbReference type="SUPFAM" id="SSF55681">
    <property type="entry name" value="Class II aaRS and biotin synthetases"/>
    <property type="match status" value="1"/>
</dbReference>
<dbReference type="PROSITE" id="PS50862">
    <property type="entry name" value="AA_TRNA_LIGASE_II"/>
    <property type="match status" value="1"/>
</dbReference>
<accession>A6X1L5</accession>